<protein>
    <recommendedName>
        <fullName>Phosphoglycerate transport system sensor protein PgtB</fullName>
        <ecNumber>2.7.13.3</ecNumber>
    </recommendedName>
</protein>
<proteinExistence type="evidence at protein level"/>
<gene>
    <name type="primary">pgtB</name>
    <name type="ordered locus">STM2397</name>
</gene>
<name>PGTB_SALTY</name>
<evidence type="ECO:0000255" key="1"/>
<evidence type="ECO:0000255" key="2">
    <source>
        <dbReference type="PROSITE-ProRule" id="PRU00102"/>
    </source>
</evidence>
<evidence type="ECO:0000255" key="3">
    <source>
        <dbReference type="PROSITE-ProRule" id="PRU00107"/>
    </source>
</evidence>
<evidence type="ECO:0000305" key="4"/>
<comment type="function">
    <text>Member of the two-component regulatory system PgtB/PgtA that regulates the inducible phosphoglycerate transport system. Activates PgtA by phosphorylation.</text>
</comment>
<comment type="catalytic activity">
    <reaction>
        <text>ATP + protein L-histidine = ADP + protein N-phospho-L-histidine.</text>
        <dbReference type="EC" id="2.7.13.3"/>
    </reaction>
</comment>
<comment type="subcellular location">
    <subcellularLocation>
        <location>Cell inner membrane</location>
        <topology>Multi-pass membrane protein</topology>
    </subcellularLocation>
</comment>
<reference key="1">
    <citation type="journal article" date="1988" name="J. Bacteriol.">
        <title>Identification of the products and nucleotide sequences of two regulatory genes involved in the exogenous induction of phosphoglycerate transport in Salmonella typhimurium.</title>
        <authorList>
            <person name="Yang Y.L."/>
            <person name="Goldrick D."/>
            <person name="Hong J.-S."/>
        </authorList>
    </citation>
    <scope>NUCLEOTIDE SEQUENCE [GENOMIC DNA]</scope>
    <source>
        <strain>LT2</strain>
    </source>
</reference>
<reference key="2">
    <citation type="journal article" date="2001" name="Nature">
        <title>Complete genome sequence of Salmonella enterica serovar Typhimurium LT2.</title>
        <authorList>
            <person name="McClelland M."/>
            <person name="Sanderson K.E."/>
            <person name="Spieth J."/>
            <person name="Clifton S.W."/>
            <person name="Latreille P."/>
            <person name="Courtney L."/>
            <person name="Porwollik S."/>
            <person name="Ali J."/>
            <person name="Dante M."/>
            <person name="Du F."/>
            <person name="Hou S."/>
            <person name="Layman D."/>
            <person name="Leonard S."/>
            <person name="Nguyen C."/>
            <person name="Scott K."/>
            <person name="Holmes A."/>
            <person name="Grewal N."/>
            <person name="Mulvaney E."/>
            <person name="Ryan E."/>
            <person name="Sun H."/>
            <person name="Florea L."/>
            <person name="Miller W."/>
            <person name="Stoneking T."/>
            <person name="Nhan M."/>
            <person name="Waterston R."/>
            <person name="Wilson R.K."/>
        </authorList>
    </citation>
    <scope>NUCLEOTIDE SEQUENCE [LARGE SCALE GENOMIC DNA]</scope>
    <source>
        <strain>LT2 / SGSC1412 / ATCC 700720</strain>
    </source>
</reference>
<reference key="3">
    <citation type="journal article" date="1988" name="J. Bacteriol.">
        <title>Genetic evidence for modulation of the activator by two regulatory proteins involved in the exogenous induction of phosphoglycerate transport in Salmonella typhimurium.</title>
        <authorList>
            <person name="Jiang S.Q."/>
            <person name="Yu G.Q."/>
            <person name="Li Z.G."/>
            <person name="Hong J.-S."/>
        </authorList>
    </citation>
    <scope>CHARACTERIZATION</scope>
</reference>
<feature type="chain" id="PRO_0000074836" description="Phosphoglycerate transport system sensor protein PgtB">
    <location>
        <begin position="1"/>
        <end position="668"/>
    </location>
</feature>
<feature type="transmembrane region" description="Helical" evidence="1">
    <location>
        <begin position="20"/>
        <end position="40"/>
    </location>
</feature>
<feature type="transmembrane region" description="Helical" evidence="1">
    <location>
        <begin position="342"/>
        <end position="362"/>
    </location>
</feature>
<feature type="domain" description="HAMP" evidence="2">
    <location>
        <begin position="364"/>
        <end position="416"/>
    </location>
</feature>
<feature type="domain" description="Histidine kinase" evidence="3">
    <location>
        <begin position="454"/>
        <end position="663"/>
    </location>
</feature>
<feature type="modified residue" description="Phosphohistidine; by autocatalysis" evidence="3">
    <location>
        <position position="457"/>
    </location>
</feature>
<feature type="sequence conflict" description="In Ref. 1; AAA68215." evidence="4" ref="1">
    <original>IDWLH</original>
    <variation>LTGSS</variation>
    <location>
        <begin position="151"/>
        <end position="155"/>
    </location>
</feature>
<feature type="sequence conflict" description="In Ref. 1; AAA68215." evidence="4" ref="1">
    <original>R</original>
    <variation>E</variation>
    <location>
        <position position="209"/>
    </location>
</feature>
<feature type="sequence conflict" description="In Ref. 1; AAA68215." evidence="4" ref="1">
    <original>T</original>
    <variation>R</variation>
    <location>
        <position position="490"/>
    </location>
</feature>
<feature type="sequence conflict" description="In Ref. 1; AAA68215." evidence="4" ref="1">
    <original>T</original>
    <variation>Y</variation>
    <location>
        <position position="510"/>
    </location>
</feature>
<feature type="sequence conflict" description="In Ref. 1; AAA68215." evidence="4" ref="1">
    <original>L</original>
    <variation>A</variation>
    <location>
        <position position="524"/>
    </location>
</feature>
<dbReference type="EC" id="2.7.13.3"/>
<dbReference type="EMBL" id="M21279">
    <property type="protein sequence ID" value="AAA68215.1"/>
    <property type="molecule type" value="Genomic_DNA"/>
</dbReference>
<dbReference type="EMBL" id="AE006468">
    <property type="protein sequence ID" value="AAL21297.1"/>
    <property type="molecule type" value="Genomic_DNA"/>
</dbReference>
<dbReference type="PIR" id="T11778">
    <property type="entry name" value="T11778"/>
</dbReference>
<dbReference type="RefSeq" id="NP_461338.1">
    <property type="nucleotide sequence ID" value="NC_003197.2"/>
</dbReference>
<dbReference type="RefSeq" id="WP_000678496.1">
    <property type="nucleotide sequence ID" value="NC_003197.2"/>
</dbReference>
<dbReference type="SMR" id="P37433"/>
<dbReference type="STRING" id="99287.STM2397"/>
<dbReference type="PaxDb" id="99287-STM2397"/>
<dbReference type="GeneID" id="1253919"/>
<dbReference type="KEGG" id="stm:STM2397"/>
<dbReference type="PATRIC" id="fig|99287.12.peg.2535"/>
<dbReference type="HOGENOM" id="CLU_020981_1_0_6"/>
<dbReference type="OMA" id="GMNICKS"/>
<dbReference type="PhylomeDB" id="P37433"/>
<dbReference type="BioCyc" id="SENT99287:STM2397-MONOMER"/>
<dbReference type="BRENDA" id="2.7.13.3">
    <property type="organism ID" value="5542"/>
</dbReference>
<dbReference type="Proteomes" id="UP000001014">
    <property type="component" value="Chromosome"/>
</dbReference>
<dbReference type="GO" id="GO:0005886">
    <property type="term" value="C:plasma membrane"/>
    <property type="evidence" value="ECO:0007669"/>
    <property type="project" value="UniProtKB-SubCell"/>
</dbReference>
<dbReference type="GO" id="GO:0005524">
    <property type="term" value="F:ATP binding"/>
    <property type="evidence" value="ECO:0007669"/>
    <property type="project" value="UniProtKB-KW"/>
</dbReference>
<dbReference type="GO" id="GO:0000155">
    <property type="term" value="F:phosphorelay sensor kinase activity"/>
    <property type="evidence" value="ECO:0007669"/>
    <property type="project" value="InterPro"/>
</dbReference>
<dbReference type="CDD" id="cd06225">
    <property type="entry name" value="HAMP"/>
    <property type="match status" value="1"/>
</dbReference>
<dbReference type="CDD" id="cd00075">
    <property type="entry name" value="HATPase"/>
    <property type="match status" value="1"/>
</dbReference>
<dbReference type="CDD" id="cd00082">
    <property type="entry name" value="HisKA"/>
    <property type="match status" value="1"/>
</dbReference>
<dbReference type="Gene3D" id="1.10.287.130">
    <property type="match status" value="1"/>
</dbReference>
<dbReference type="Gene3D" id="6.10.340.10">
    <property type="match status" value="1"/>
</dbReference>
<dbReference type="Gene3D" id="3.30.565.10">
    <property type="entry name" value="Histidine kinase-like ATPase, C-terminal domain"/>
    <property type="match status" value="1"/>
</dbReference>
<dbReference type="InterPro" id="IPR003660">
    <property type="entry name" value="HAMP_dom"/>
</dbReference>
<dbReference type="InterPro" id="IPR036890">
    <property type="entry name" value="HATPase_C_sf"/>
</dbReference>
<dbReference type="InterPro" id="IPR005467">
    <property type="entry name" value="His_kinase_dom"/>
</dbReference>
<dbReference type="InterPro" id="IPR003661">
    <property type="entry name" value="HisK_dim/P_dom"/>
</dbReference>
<dbReference type="InterPro" id="IPR036097">
    <property type="entry name" value="HisK_dim/P_sf"/>
</dbReference>
<dbReference type="InterPro" id="IPR017116">
    <property type="entry name" value="Sig_transdc_His_kinase_PgtB"/>
</dbReference>
<dbReference type="NCBIfam" id="NF047794">
    <property type="entry name" value="HisKinPtgB"/>
    <property type="match status" value="1"/>
</dbReference>
<dbReference type="PANTHER" id="PTHR43065">
    <property type="entry name" value="SENSOR HISTIDINE KINASE"/>
    <property type="match status" value="1"/>
</dbReference>
<dbReference type="PANTHER" id="PTHR43065:SF16">
    <property type="entry name" value="SENSORY HISTIDINE KINASE_PHOSPHATASE NTRB"/>
    <property type="match status" value="1"/>
</dbReference>
<dbReference type="Pfam" id="PF00672">
    <property type="entry name" value="HAMP"/>
    <property type="match status" value="1"/>
</dbReference>
<dbReference type="Pfam" id="PF02518">
    <property type="entry name" value="HATPase_c"/>
    <property type="match status" value="1"/>
</dbReference>
<dbReference type="Pfam" id="PF00512">
    <property type="entry name" value="HisKA"/>
    <property type="match status" value="1"/>
</dbReference>
<dbReference type="PIRSF" id="PIRSF037119">
    <property type="entry name" value="STHK_PgtB"/>
    <property type="match status" value="1"/>
</dbReference>
<dbReference type="SMART" id="SM00304">
    <property type="entry name" value="HAMP"/>
    <property type="match status" value="1"/>
</dbReference>
<dbReference type="SMART" id="SM00387">
    <property type="entry name" value="HATPase_c"/>
    <property type="match status" value="1"/>
</dbReference>
<dbReference type="SMART" id="SM00388">
    <property type="entry name" value="HisKA"/>
    <property type="match status" value="1"/>
</dbReference>
<dbReference type="SUPFAM" id="SSF55874">
    <property type="entry name" value="ATPase domain of HSP90 chaperone/DNA topoisomerase II/histidine kinase"/>
    <property type="match status" value="1"/>
</dbReference>
<dbReference type="SUPFAM" id="SSF47384">
    <property type="entry name" value="Homodimeric domain of signal transducing histidine kinase"/>
    <property type="match status" value="1"/>
</dbReference>
<dbReference type="PROSITE" id="PS50885">
    <property type="entry name" value="HAMP"/>
    <property type="match status" value="1"/>
</dbReference>
<dbReference type="PROSITE" id="PS50109">
    <property type="entry name" value="HIS_KIN"/>
    <property type="match status" value="1"/>
</dbReference>
<accession>P37433</accession>
<organism>
    <name type="scientific">Salmonella typhimurium (strain LT2 / SGSC1412 / ATCC 700720)</name>
    <dbReference type="NCBI Taxonomy" id="99287"/>
    <lineage>
        <taxon>Bacteria</taxon>
        <taxon>Pseudomonadati</taxon>
        <taxon>Pseudomonadota</taxon>
        <taxon>Gammaproteobacteria</taxon>
        <taxon>Enterobacterales</taxon>
        <taxon>Enterobacteriaceae</taxon>
        <taxon>Salmonella</taxon>
    </lineage>
</organism>
<keyword id="KW-0067">ATP-binding</keyword>
<keyword id="KW-0997">Cell inner membrane</keyword>
<keyword id="KW-1003">Cell membrane</keyword>
<keyword id="KW-0418">Kinase</keyword>
<keyword id="KW-0472">Membrane</keyword>
<keyword id="KW-0547">Nucleotide-binding</keyword>
<keyword id="KW-0597">Phosphoprotein</keyword>
<keyword id="KW-1185">Reference proteome</keyword>
<keyword id="KW-0808">Transferase</keyword>
<keyword id="KW-0812">Transmembrane</keyword>
<keyword id="KW-1133">Transmembrane helix</keyword>
<keyword id="KW-0902">Two-component regulatory system</keyword>
<sequence length="668" mass="75403">MKGRLLQRLRQLSISNSLRGAFLTGALLTLIVSMVSLYSWHEQSSQVRYSLDEYFPRIHSAFLIEGNLNLAVDQLNEFLLAPNTTVRLQLRTQIIQHLDKIERLSQGLQLAERRQLAVILQDSRTLLAELDNALYNMFLVREKVSELSARIDWLHDDFTTELNSLVQDFTWQQGTLLDQIEANQGDAAQYLQRSREVQNEQQQVYTLARIENQIVDDLRDRLNELKSGNNDGMLVETHIRYLENLKKTADENIRALDDWPSTITLRQTIDELLEIGMVKNKMPDTMRDYVAAQKALLDASRAREATLGRFRTLLEAQLGSSHQQMQTFNQRLEQIVRVSGGLILVATLLALLLAWGLNHYFIRSRLVKRFTALNQAVVQIGLGRTDSTIPVYGRDELGRIARLLRHTLGQLNMQRRQLEQEVAERKEIEADLRAMQDELIQTAKLAVVGQTMTTLAHEINQPLNALSMYLFTAGRAIEQGQSGQARNTLTKAEGLINRIDAIIRSLRQFTRRAELETPLYPVDLRQTFVAAWELLAMRHQSRQGALSLPTDTVWVSGDEVRIQQVLVNVLANALDACSHDAVIAVTWQTQGEALEVYIADNGPGWPVALLPSLLKPFTTSKAVGLGIGLSISVSLMAQMKGDLRLASTLTRNACVVLQFSVTDVDDVE</sequence>